<reference key="1">
    <citation type="submission" date="2007-11" db="EMBL/GenBank/DDBJ databases">
        <authorList>
            <consortium name="The Salmonella enterica serovar Paratyphi B Genome Sequencing Project"/>
            <person name="McClelland M."/>
            <person name="Sanderson E.K."/>
            <person name="Porwollik S."/>
            <person name="Spieth J."/>
            <person name="Clifton W.S."/>
            <person name="Fulton R."/>
            <person name="Cordes M."/>
            <person name="Wollam A."/>
            <person name="Shah N."/>
            <person name="Pepin K."/>
            <person name="Bhonagiri V."/>
            <person name="Nash W."/>
            <person name="Johnson M."/>
            <person name="Thiruvilangam P."/>
            <person name="Wilson R."/>
        </authorList>
    </citation>
    <scope>NUCLEOTIDE SEQUENCE [LARGE SCALE GENOMIC DNA]</scope>
    <source>
        <strain>ATCC BAA-1250 / SPB7</strain>
    </source>
</reference>
<feature type="chain" id="PRO_1000080448" description="3-hydroxyacyl-[acyl-carrier-protein] dehydratase FabZ">
    <location>
        <begin position="1"/>
        <end position="151"/>
    </location>
</feature>
<feature type="active site" evidence="1">
    <location>
        <position position="54"/>
    </location>
</feature>
<accession>A9N0T0</accession>
<comment type="function">
    <text evidence="1">Involved in unsaturated fatty acids biosynthesis. Catalyzes the dehydration of short chain beta-hydroxyacyl-ACPs and long chain saturated and unsaturated beta-hydroxyacyl-ACPs.</text>
</comment>
<comment type="catalytic activity">
    <reaction evidence="1">
        <text>a (3R)-hydroxyacyl-[ACP] = a (2E)-enoyl-[ACP] + H2O</text>
        <dbReference type="Rhea" id="RHEA:13097"/>
        <dbReference type="Rhea" id="RHEA-COMP:9925"/>
        <dbReference type="Rhea" id="RHEA-COMP:9945"/>
        <dbReference type="ChEBI" id="CHEBI:15377"/>
        <dbReference type="ChEBI" id="CHEBI:78784"/>
        <dbReference type="ChEBI" id="CHEBI:78827"/>
        <dbReference type="EC" id="4.2.1.59"/>
    </reaction>
</comment>
<comment type="subcellular location">
    <subcellularLocation>
        <location evidence="1">Cytoplasm</location>
    </subcellularLocation>
</comment>
<comment type="similarity">
    <text evidence="1">Belongs to the thioester dehydratase family. FabZ subfamily.</text>
</comment>
<gene>
    <name evidence="1" type="primary">fabZ</name>
    <name type="ordered locus">SPAB_00291</name>
</gene>
<protein>
    <recommendedName>
        <fullName evidence="1">3-hydroxyacyl-[acyl-carrier-protein] dehydratase FabZ</fullName>
        <ecNumber evidence="1">4.2.1.59</ecNumber>
    </recommendedName>
    <alternativeName>
        <fullName evidence="1">(3R)-hydroxymyristoyl-[acyl-carrier-protein] dehydratase</fullName>
        <shortName evidence="1">(3R)-hydroxymyristoyl-ACP dehydrase</shortName>
    </alternativeName>
    <alternativeName>
        <fullName evidence="1">Beta-hydroxyacyl-ACP dehydratase</fullName>
    </alternativeName>
</protein>
<keyword id="KW-0963">Cytoplasm</keyword>
<keyword id="KW-0441">Lipid A biosynthesis</keyword>
<keyword id="KW-0444">Lipid biosynthesis</keyword>
<keyword id="KW-0443">Lipid metabolism</keyword>
<keyword id="KW-0456">Lyase</keyword>
<dbReference type="EC" id="4.2.1.59" evidence="1"/>
<dbReference type="EMBL" id="CP000886">
    <property type="protein sequence ID" value="ABX65732.1"/>
    <property type="molecule type" value="Genomic_DNA"/>
</dbReference>
<dbReference type="RefSeq" id="WP_000210741.1">
    <property type="nucleotide sequence ID" value="NC_010102.1"/>
</dbReference>
<dbReference type="SMR" id="A9N0T0"/>
<dbReference type="GeneID" id="66754751"/>
<dbReference type="KEGG" id="spq:SPAB_00291"/>
<dbReference type="PATRIC" id="fig|1016998.12.peg.279"/>
<dbReference type="HOGENOM" id="CLU_078912_1_0_6"/>
<dbReference type="BioCyc" id="SENT1016998:SPAB_RS01175-MONOMER"/>
<dbReference type="Proteomes" id="UP000008556">
    <property type="component" value="Chromosome"/>
</dbReference>
<dbReference type="GO" id="GO:0005737">
    <property type="term" value="C:cytoplasm"/>
    <property type="evidence" value="ECO:0007669"/>
    <property type="project" value="UniProtKB-SubCell"/>
</dbReference>
<dbReference type="GO" id="GO:0016020">
    <property type="term" value="C:membrane"/>
    <property type="evidence" value="ECO:0007669"/>
    <property type="project" value="GOC"/>
</dbReference>
<dbReference type="GO" id="GO:0019171">
    <property type="term" value="F:(3R)-hydroxyacyl-[acyl-carrier-protein] dehydratase activity"/>
    <property type="evidence" value="ECO:0007669"/>
    <property type="project" value="UniProtKB-EC"/>
</dbReference>
<dbReference type="GO" id="GO:0006633">
    <property type="term" value="P:fatty acid biosynthetic process"/>
    <property type="evidence" value="ECO:0007669"/>
    <property type="project" value="UniProtKB-UniRule"/>
</dbReference>
<dbReference type="GO" id="GO:0009245">
    <property type="term" value="P:lipid A biosynthetic process"/>
    <property type="evidence" value="ECO:0007669"/>
    <property type="project" value="UniProtKB-UniRule"/>
</dbReference>
<dbReference type="CDD" id="cd01288">
    <property type="entry name" value="FabZ"/>
    <property type="match status" value="1"/>
</dbReference>
<dbReference type="FunFam" id="3.10.129.10:FF:000001">
    <property type="entry name" value="3-hydroxyacyl-[acyl-carrier-protein] dehydratase FabZ"/>
    <property type="match status" value="1"/>
</dbReference>
<dbReference type="Gene3D" id="3.10.129.10">
    <property type="entry name" value="Hotdog Thioesterase"/>
    <property type="match status" value="1"/>
</dbReference>
<dbReference type="HAMAP" id="MF_00406">
    <property type="entry name" value="FabZ"/>
    <property type="match status" value="1"/>
</dbReference>
<dbReference type="InterPro" id="IPR013114">
    <property type="entry name" value="FabA_FabZ"/>
</dbReference>
<dbReference type="InterPro" id="IPR010084">
    <property type="entry name" value="FabZ"/>
</dbReference>
<dbReference type="InterPro" id="IPR029069">
    <property type="entry name" value="HotDog_dom_sf"/>
</dbReference>
<dbReference type="NCBIfam" id="TIGR01750">
    <property type="entry name" value="fabZ"/>
    <property type="match status" value="1"/>
</dbReference>
<dbReference type="NCBIfam" id="NF000582">
    <property type="entry name" value="PRK00006.1"/>
    <property type="match status" value="1"/>
</dbReference>
<dbReference type="PANTHER" id="PTHR30272">
    <property type="entry name" value="3-HYDROXYACYL-[ACYL-CARRIER-PROTEIN] DEHYDRATASE"/>
    <property type="match status" value="1"/>
</dbReference>
<dbReference type="PANTHER" id="PTHR30272:SF1">
    <property type="entry name" value="3-HYDROXYACYL-[ACYL-CARRIER-PROTEIN] DEHYDRATASE"/>
    <property type="match status" value="1"/>
</dbReference>
<dbReference type="Pfam" id="PF07977">
    <property type="entry name" value="FabA"/>
    <property type="match status" value="1"/>
</dbReference>
<dbReference type="SUPFAM" id="SSF54637">
    <property type="entry name" value="Thioesterase/thiol ester dehydrase-isomerase"/>
    <property type="match status" value="1"/>
</dbReference>
<evidence type="ECO:0000255" key="1">
    <source>
        <dbReference type="HAMAP-Rule" id="MF_00406"/>
    </source>
</evidence>
<proteinExistence type="inferred from homology"/>
<sequence>MTTNTHTLQIEEILELLPHRFPFLLVDRVLDFEEGRFLRAVKNVSVNEPFFQGHFPGKPILPGVLILEAMAQATGILAFKSVGKLEPGELYYFAGIDEARFKRPVVPGDQMIMEVTFEKTRRGLTRFKGVALVDGKVVCEATMMCARSREA</sequence>
<name>FABZ_SALPB</name>
<organism>
    <name type="scientific">Salmonella paratyphi B (strain ATCC BAA-1250 / SPB7)</name>
    <dbReference type="NCBI Taxonomy" id="1016998"/>
    <lineage>
        <taxon>Bacteria</taxon>
        <taxon>Pseudomonadati</taxon>
        <taxon>Pseudomonadota</taxon>
        <taxon>Gammaproteobacteria</taxon>
        <taxon>Enterobacterales</taxon>
        <taxon>Enterobacteriaceae</taxon>
        <taxon>Salmonella</taxon>
    </lineage>
</organism>